<comment type="function">
    <text evidence="1">Provides the (R)-glutamate required for cell wall biosynthesis.</text>
</comment>
<comment type="catalytic activity">
    <reaction evidence="1">
        <text>L-glutamate = D-glutamate</text>
        <dbReference type="Rhea" id="RHEA:12813"/>
        <dbReference type="ChEBI" id="CHEBI:29985"/>
        <dbReference type="ChEBI" id="CHEBI:29986"/>
        <dbReference type="EC" id="5.1.1.3"/>
    </reaction>
</comment>
<comment type="pathway">
    <text evidence="1">Cell wall biogenesis; peptidoglycan biosynthesis.</text>
</comment>
<comment type="similarity">
    <text evidence="1">Belongs to the aspartate/glutamate racemases family.</text>
</comment>
<sequence>MSINDKPIGFFDSGVGGISVLKEAFKLLPKEDFLYYGDSKNAPYGTKKVEEVKALTFNATDFLMSKGIKALVVACNTATSVTINDLRENYDIPIIGIEPALKPAVELKKGGKIIIMATPMTLAEKKFANLMDLYKETEDIEPLPCPGLPELIEQGIVSGDVIYNYLKDKFSKYDNEKISSIVLGCTHYPFIEETLKEVTHNKACIIDGSFGTSRELKRQLKNSNMLTEENRVGKVTIFNSREDKDIIDLSYKLFNMK</sequence>
<protein>
    <recommendedName>
        <fullName evidence="1">Glutamate racemase</fullName>
        <ecNumber evidence="1">5.1.1.3</ecNumber>
    </recommendedName>
</protein>
<dbReference type="EC" id="5.1.1.3" evidence="1"/>
<dbReference type="EMBL" id="CP000726">
    <property type="protein sequence ID" value="ABS35291.1"/>
    <property type="molecule type" value="Genomic_DNA"/>
</dbReference>
<dbReference type="RefSeq" id="WP_012048400.1">
    <property type="nucleotide sequence ID" value="NC_009697.1"/>
</dbReference>
<dbReference type="SMR" id="A7FZC4"/>
<dbReference type="GeneID" id="5187853"/>
<dbReference type="KEGG" id="cba:CLB_3644"/>
<dbReference type="HOGENOM" id="CLU_052344_1_0_9"/>
<dbReference type="UniPathway" id="UPA00219"/>
<dbReference type="GO" id="GO:0008881">
    <property type="term" value="F:glutamate racemase activity"/>
    <property type="evidence" value="ECO:0007669"/>
    <property type="project" value="UniProtKB-UniRule"/>
</dbReference>
<dbReference type="GO" id="GO:0071555">
    <property type="term" value="P:cell wall organization"/>
    <property type="evidence" value="ECO:0007669"/>
    <property type="project" value="UniProtKB-KW"/>
</dbReference>
<dbReference type="GO" id="GO:0009252">
    <property type="term" value="P:peptidoglycan biosynthetic process"/>
    <property type="evidence" value="ECO:0007669"/>
    <property type="project" value="UniProtKB-UniRule"/>
</dbReference>
<dbReference type="GO" id="GO:0008360">
    <property type="term" value="P:regulation of cell shape"/>
    <property type="evidence" value="ECO:0007669"/>
    <property type="project" value="UniProtKB-KW"/>
</dbReference>
<dbReference type="FunFam" id="3.40.50.1860:FF:000002">
    <property type="entry name" value="Glutamate racemase"/>
    <property type="match status" value="1"/>
</dbReference>
<dbReference type="Gene3D" id="3.40.50.1860">
    <property type="match status" value="2"/>
</dbReference>
<dbReference type="HAMAP" id="MF_00258">
    <property type="entry name" value="Glu_racemase"/>
    <property type="match status" value="1"/>
</dbReference>
<dbReference type="InterPro" id="IPR015942">
    <property type="entry name" value="Asp/Glu/hydantoin_racemase"/>
</dbReference>
<dbReference type="InterPro" id="IPR001920">
    <property type="entry name" value="Asp/Glu_race"/>
</dbReference>
<dbReference type="InterPro" id="IPR018187">
    <property type="entry name" value="Asp/Glu_racemase_AS_1"/>
</dbReference>
<dbReference type="InterPro" id="IPR033134">
    <property type="entry name" value="Asp/Glu_racemase_AS_2"/>
</dbReference>
<dbReference type="InterPro" id="IPR004391">
    <property type="entry name" value="Glu_race"/>
</dbReference>
<dbReference type="NCBIfam" id="TIGR00067">
    <property type="entry name" value="glut_race"/>
    <property type="match status" value="1"/>
</dbReference>
<dbReference type="PANTHER" id="PTHR21198">
    <property type="entry name" value="GLUTAMATE RACEMASE"/>
    <property type="match status" value="1"/>
</dbReference>
<dbReference type="PANTHER" id="PTHR21198:SF3">
    <property type="entry name" value="GLUTAMATE RACEMASE"/>
    <property type="match status" value="1"/>
</dbReference>
<dbReference type="Pfam" id="PF01177">
    <property type="entry name" value="Asp_Glu_race"/>
    <property type="match status" value="1"/>
</dbReference>
<dbReference type="SUPFAM" id="SSF53681">
    <property type="entry name" value="Aspartate/glutamate racemase"/>
    <property type="match status" value="2"/>
</dbReference>
<dbReference type="PROSITE" id="PS00923">
    <property type="entry name" value="ASP_GLU_RACEMASE_1"/>
    <property type="match status" value="1"/>
</dbReference>
<dbReference type="PROSITE" id="PS00924">
    <property type="entry name" value="ASP_GLU_RACEMASE_2"/>
    <property type="match status" value="1"/>
</dbReference>
<name>MURI_CLOB1</name>
<evidence type="ECO:0000255" key="1">
    <source>
        <dbReference type="HAMAP-Rule" id="MF_00258"/>
    </source>
</evidence>
<keyword id="KW-0133">Cell shape</keyword>
<keyword id="KW-0961">Cell wall biogenesis/degradation</keyword>
<keyword id="KW-0413">Isomerase</keyword>
<keyword id="KW-0573">Peptidoglycan synthesis</keyword>
<organism>
    <name type="scientific">Clostridium botulinum (strain ATCC 19397 / Type A)</name>
    <dbReference type="NCBI Taxonomy" id="441770"/>
    <lineage>
        <taxon>Bacteria</taxon>
        <taxon>Bacillati</taxon>
        <taxon>Bacillota</taxon>
        <taxon>Clostridia</taxon>
        <taxon>Eubacteriales</taxon>
        <taxon>Clostridiaceae</taxon>
        <taxon>Clostridium</taxon>
    </lineage>
</organism>
<proteinExistence type="inferred from homology"/>
<accession>A7FZC4</accession>
<reference key="1">
    <citation type="journal article" date="2007" name="PLoS ONE">
        <title>Analysis of the neurotoxin complex genes in Clostridium botulinum A1-A4 and B1 strains: BoNT/A3, /Ba4 and /B1 clusters are located within plasmids.</title>
        <authorList>
            <person name="Smith T.J."/>
            <person name="Hill K.K."/>
            <person name="Foley B.T."/>
            <person name="Detter J.C."/>
            <person name="Munk A.C."/>
            <person name="Bruce D.C."/>
            <person name="Doggett N.A."/>
            <person name="Smith L.A."/>
            <person name="Marks J.D."/>
            <person name="Xie G."/>
            <person name="Brettin T.S."/>
        </authorList>
    </citation>
    <scope>NUCLEOTIDE SEQUENCE [LARGE SCALE GENOMIC DNA]</scope>
    <source>
        <strain>ATCC 19397 / Type A</strain>
    </source>
</reference>
<feature type="chain" id="PRO_1000047556" description="Glutamate racemase">
    <location>
        <begin position="1"/>
        <end position="257"/>
    </location>
</feature>
<feature type="active site" description="Proton donor/acceptor" evidence="1">
    <location>
        <position position="75"/>
    </location>
</feature>
<feature type="active site" description="Proton donor/acceptor" evidence="1">
    <location>
        <position position="185"/>
    </location>
</feature>
<feature type="binding site" evidence="1">
    <location>
        <begin position="12"/>
        <end position="13"/>
    </location>
    <ligand>
        <name>substrate</name>
    </ligand>
</feature>
<feature type="binding site" evidence="1">
    <location>
        <begin position="44"/>
        <end position="45"/>
    </location>
    <ligand>
        <name>substrate</name>
    </ligand>
</feature>
<feature type="binding site" evidence="1">
    <location>
        <begin position="76"/>
        <end position="77"/>
    </location>
    <ligand>
        <name>substrate</name>
    </ligand>
</feature>
<feature type="binding site" evidence="1">
    <location>
        <begin position="186"/>
        <end position="187"/>
    </location>
    <ligand>
        <name>substrate</name>
    </ligand>
</feature>
<gene>
    <name evidence="1" type="primary">murI</name>
    <name type="ordered locus">CLB_3644</name>
</gene>